<reference key="1">
    <citation type="journal article" date="2009" name="J. Bacteriol.">
        <title>Complete genome sequence of the extremophilic Bacillus cereus strain Q1 with industrial applications.</title>
        <authorList>
            <person name="Xiong Z."/>
            <person name="Jiang Y."/>
            <person name="Qi D."/>
            <person name="Lu H."/>
            <person name="Yang F."/>
            <person name="Yang J."/>
            <person name="Chen L."/>
            <person name="Sun L."/>
            <person name="Xu X."/>
            <person name="Xue Y."/>
            <person name="Zhu Y."/>
            <person name="Jin Q."/>
        </authorList>
    </citation>
    <scope>NUCLEOTIDE SEQUENCE [LARGE SCALE GENOMIC DNA]</scope>
    <source>
        <strain>Q1</strain>
    </source>
</reference>
<name>SEPF_BACCQ</name>
<gene>
    <name evidence="1" type="primary">sepF</name>
    <name type="ordered locus">BCQ_3685</name>
</gene>
<accession>B9IVX6</accession>
<dbReference type="EMBL" id="CP000227">
    <property type="protein sequence ID" value="ACM14113.1"/>
    <property type="molecule type" value="Genomic_DNA"/>
</dbReference>
<dbReference type="SMR" id="B9IVX6"/>
<dbReference type="KEGG" id="bcq:BCQ_3685"/>
<dbReference type="HOGENOM" id="CLU_078499_4_1_9"/>
<dbReference type="Proteomes" id="UP000000441">
    <property type="component" value="Chromosome"/>
</dbReference>
<dbReference type="GO" id="GO:0005737">
    <property type="term" value="C:cytoplasm"/>
    <property type="evidence" value="ECO:0007669"/>
    <property type="project" value="UniProtKB-SubCell"/>
</dbReference>
<dbReference type="GO" id="GO:0000917">
    <property type="term" value="P:division septum assembly"/>
    <property type="evidence" value="ECO:0007669"/>
    <property type="project" value="UniProtKB-KW"/>
</dbReference>
<dbReference type="GO" id="GO:0043093">
    <property type="term" value="P:FtsZ-dependent cytokinesis"/>
    <property type="evidence" value="ECO:0007669"/>
    <property type="project" value="UniProtKB-UniRule"/>
</dbReference>
<dbReference type="Gene3D" id="3.30.110.150">
    <property type="entry name" value="SepF-like protein"/>
    <property type="match status" value="1"/>
</dbReference>
<dbReference type="HAMAP" id="MF_01197">
    <property type="entry name" value="SepF"/>
    <property type="match status" value="1"/>
</dbReference>
<dbReference type="InterPro" id="IPR023052">
    <property type="entry name" value="Cell_div_SepF"/>
</dbReference>
<dbReference type="InterPro" id="IPR007561">
    <property type="entry name" value="Cell_div_SepF/SepF-rel"/>
</dbReference>
<dbReference type="InterPro" id="IPR038594">
    <property type="entry name" value="SepF-like_sf"/>
</dbReference>
<dbReference type="PANTHER" id="PTHR35798">
    <property type="entry name" value="CELL DIVISION PROTEIN SEPF"/>
    <property type="match status" value="1"/>
</dbReference>
<dbReference type="PANTHER" id="PTHR35798:SF1">
    <property type="entry name" value="CELL DIVISION PROTEIN SEPF"/>
    <property type="match status" value="1"/>
</dbReference>
<dbReference type="Pfam" id="PF04472">
    <property type="entry name" value="SepF"/>
    <property type="match status" value="1"/>
</dbReference>
<organism>
    <name type="scientific">Bacillus cereus (strain Q1)</name>
    <dbReference type="NCBI Taxonomy" id="361100"/>
    <lineage>
        <taxon>Bacteria</taxon>
        <taxon>Bacillati</taxon>
        <taxon>Bacillota</taxon>
        <taxon>Bacilli</taxon>
        <taxon>Bacillales</taxon>
        <taxon>Bacillaceae</taxon>
        <taxon>Bacillus</taxon>
        <taxon>Bacillus cereus group</taxon>
    </lineage>
</organism>
<sequence>MSWSKVKYFFFDTPEEKEAAQYSYEKEQTDMKKQQDPPEQQDVTFPKAQTKQNVVSIETAKQSSKVVLLEPRTYSEAQGIADHLKGRRAVVINLQRMSTDQAVRIVDFLSGTVYAIGGDIQKIGPKTFMCTPENVDIVGAISELFGEEEDTNIKRW</sequence>
<protein>
    <recommendedName>
        <fullName evidence="1">Cell division protein SepF</fullName>
    </recommendedName>
</protein>
<proteinExistence type="inferred from homology"/>
<feature type="chain" id="PRO_1000164527" description="Cell division protein SepF">
    <location>
        <begin position="1"/>
        <end position="156"/>
    </location>
</feature>
<feature type="region of interest" description="Disordered" evidence="2">
    <location>
        <begin position="23"/>
        <end position="48"/>
    </location>
</feature>
<feature type="compositionally biased region" description="Basic and acidic residues" evidence="2">
    <location>
        <begin position="23"/>
        <end position="36"/>
    </location>
</feature>
<feature type="compositionally biased region" description="Polar residues" evidence="2">
    <location>
        <begin position="37"/>
        <end position="48"/>
    </location>
</feature>
<comment type="function">
    <text evidence="1">Cell division protein that is part of the divisome complex and is recruited early to the Z-ring. Probably stimulates Z-ring formation, perhaps through the cross-linking of FtsZ protofilaments. Its function overlaps with FtsA.</text>
</comment>
<comment type="subunit">
    <text evidence="1">Homodimer. Interacts with FtsZ.</text>
</comment>
<comment type="subcellular location">
    <subcellularLocation>
        <location evidence="1">Cytoplasm</location>
    </subcellularLocation>
    <text evidence="1">Localizes to the division site, in a FtsZ-dependent manner.</text>
</comment>
<comment type="similarity">
    <text evidence="1">Belongs to the SepF family.</text>
</comment>
<evidence type="ECO:0000255" key="1">
    <source>
        <dbReference type="HAMAP-Rule" id="MF_01197"/>
    </source>
</evidence>
<evidence type="ECO:0000256" key="2">
    <source>
        <dbReference type="SAM" id="MobiDB-lite"/>
    </source>
</evidence>
<keyword id="KW-0131">Cell cycle</keyword>
<keyword id="KW-0132">Cell division</keyword>
<keyword id="KW-0963">Cytoplasm</keyword>
<keyword id="KW-0717">Septation</keyword>